<comment type="function">
    <text evidence="1">Involved in the biosynthesis of isopentenyl diphosphate (IPP) and dimethylallyl diphosphate (DMAPP), two major building blocks of isoprenoid compounds. Catalyzes the conversion of 4-diphosphocytidyl-2-C-methyl-D-erythritol 2-phosphate (CDP-ME2P) to 2-C-methyl-D-erythritol 2,4-cyclodiphosphate (ME-CPP) with a corresponding release of cytidine 5-monophosphate (CMP).</text>
</comment>
<comment type="catalytic activity">
    <reaction evidence="1">
        <text>4-CDP-2-C-methyl-D-erythritol 2-phosphate = 2-C-methyl-D-erythritol 2,4-cyclic diphosphate + CMP</text>
        <dbReference type="Rhea" id="RHEA:23864"/>
        <dbReference type="ChEBI" id="CHEBI:57919"/>
        <dbReference type="ChEBI" id="CHEBI:58483"/>
        <dbReference type="ChEBI" id="CHEBI:60377"/>
        <dbReference type="EC" id="4.6.1.12"/>
    </reaction>
</comment>
<comment type="cofactor">
    <cofactor evidence="1">
        <name>a divalent metal cation</name>
        <dbReference type="ChEBI" id="CHEBI:60240"/>
    </cofactor>
    <text evidence="1">Binds 1 divalent metal cation per subunit.</text>
</comment>
<comment type="pathway">
    <text evidence="1">Isoprenoid biosynthesis; isopentenyl diphosphate biosynthesis via DXP pathway; isopentenyl diphosphate from 1-deoxy-D-xylulose 5-phosphate: step 4/6.</text>
</comment>
<comment type="subunit">
    <text evidence="1">Homotrimer.</text>
</comment>
<comment type="similarity">
    <text evidence="1">Belongs to the IspF family.</text>
</comment>
<gene>
    <name evidence="1" type="primary">ispF</name>
    <name type="ordered locus">BT9727_0083</name>
</gene>
<dbReference type="EC" id="4.6.1.12" evidence="1"/>
<dbReference type="EMBL" id="AE017355">
    <property type="protein sequence ID" value="AAT61500.1"/>
    <property type="molecule type" value="Genomic_DNA"/>
</dbReference>
<dbReference type="RefSeq" id="WP_000488386.1">
    <property type="nucleotide sequence ID" value="NC_005957.1"/>
</dbReference>
<dbReference type="RefSeq" id="YP_034439.1">
    <property type="nucleotide sequence ID" value="NC_005957.1"/>
</dbReference>
<dbReference type="SMR" id="Q6HPT1"/>
<dbReference type="GeneID" id="93010967"/>
<dbReference type="KEGG" id="btk:BT9727_0083"/>
<dbReference type="PATRIC" id="fig|281309.8.peg.84"/>
<dbReference type="HOGENOM" id="CLU_084630_2_0_9"/>
<dbReference type="UniPathway" id="UPA00056">
    <property type="reaction ID" value="UER00095"/>
</dbReference>
<dbReference type="PRO" id="PR:Q6HPT1"/>
<dbReference type="Proteomes" id="UP000001301">
    <property type="component" value="Chromosome"/>
</dbReference>
<dbReference type="GO" id="GO:0008685">
    <property type="term" value="F:2-C-methyl-D-erythritol 2,4-cyclodiphosphate synthase activity"/>
    <property type="evidence" value="ECO:0007669"/>
    <property type="project" value="UniProtKB-UniRule"/>
</dbReference>
<dbReference type="GO" id="GO:0046872">
    <property type="term" value="F:metal ion binding"/>
    <property type="evidence" value="ECO:0007669"/>
    <property type="project" value="UniProtKB-KW"/>
</dbReference>
<dbReference type="GO" id="GO:0019288">
    <property type="term" value="P:isopentenyl diphosphate biosynthetic process, methylerythritol 4-phosphate pathway"/>
    <property type="evidence" value="ECO:0007669"/>
    <property type="project" value="UniProtKB-UniRule"/>
</dbReference>
<dbReference type="GO" id="GO:0016114">
    <property type="term" value="P:terpenoid biosynthetic process"/>
    <property type="evidence" value="ECO:0007669"/>
    <property type="project" value="InterPro"/>
</dbReference>
<dbReference type="CDD" id="cd00554">
    <property type="entry name" value="MECDP_synthase"/>
    <property type="match status" value="1"/>
</dbReference>
<dbReference type="FunFam" id="3.30.1330.50:FF:000001">
    <property type="entry name" value="2-C-methyl-D-erythritol 2,4-cyclodiphosphate synthase"/>
    <property type="match status" value="1"/>
</dbReference>
<dbReference type="Gene3D" id="3.30.1330.50">
    <property type="entry name" value="2-C-methyl-D-erythritol 2,4-cyclodiphosphate synthase"/>
    <property type="match status" value="1"/>
</dbReference>
<dbReference type="HAMAP" id="MF_00107">
    <property type="entry name" value="IspF"/>
    <property type="match status" value="1"/>
</dbReference>
<dbReference type="InterPro" id="IPR003526">
    <property type="entry name" value="MECDP_synthase"/>
</dbReference>
<dbReference type="InterPro" id="IPR020555">
    <property type="entry name" value="MECDP_synthase_CS"/>
</dbReference>
<dbReference type="InterPro" id="IPR036571">
    <property type="entry name" value="MECDP_synthase_sf"/>
</dbReference>
<dbReference type="NCBIfam" id="TIGR00151">
    <property type="entry name" value="ispF"/>
    <property type="match status" value="1"/>
</dbReference>
<dbReference type="PANTHER" id="PTHR43181">
    <property type="entry name" value="2-C-METHYL-D-ERYTHRITOL 2,4-CYCLODIPHOSPHATE SYNTHASE, CHLOROPLASTIC"/>
    <property type="match status" value="1"/>
</dbReference>
<dbReference type="PANTHER" id="PTHR43181:SF1">
    <property type="entry name" value="2-C-METHYL-D-ERYTHRITOL 2,4-CYCLODIPHOSPHATE SYNTHASE, CHLOROPLASTIC"/>
    <property type="match status" value="1"/>
</dbReference>
<dbReference type="Pfam" id="PF02542">
    <property type="entry name" value="YgbB"/>
    <property type="match status" value="1"/>
</dbReference>
<dbReference type="SUPFAM" id="SSF69765">
    <property type="entry name" value="IpsF-like"/>
    <property type="match status" value="1"/>
</dbReference>
<dbReference type="PROSITE" id="PS01350">
    <property type="entry name" value="ISPF"/>
    <property type="match status" value="1"/>
</dbReference>
<protein>
    <recommendedName>
        <fullName evidence="1">2-C-methyl-D-erythritol 2,4-cyclodiphosphate synthase</fullName>
        <shortName evidence="1">MECDP-synthase</shortName>
        <shortName evidence="1">MECPP-synthase</shortName>
        <shortName evidence="1">MECPS</shortName>
        <ecNumber evidence="1">4.6.1.12</ecNumber>
    </recommendedName>
</protein>
<organism>
    <name type="scientific">Bacillus thuringiensis subsp. konkukian (strain 97-27)</name>
    <dbReference type="NCBI Taxonomy" id="281309"/>
    <lineage>
        <taxon>Bacteria</taxon>
        <taxon>Bacillati</taxon>
        <taxon>Bacillota</taxon>
        <taxon>Bacilli</taxon>
        <taxon>Bacillales</taxon>
        <taxon>Bacillaceae</taxon>
        <taxon>Bacillus</taxon>
        <taxon>Bacillus cereus group</taxon>
    </lineage>
</organism>
<keyword id="KW-0414">Isoprene biosynthesis</keyword>
<keyword id="KW-0456">Lyase</keyword>
<keyword id="KW-0479">Metal-binding</keyword>
<reference key="1">
    <citation type="journal article" date="2006" name="J. Bacteriol.">
        <title>Pathogenomic sequence analysis of Bacillus cereus and Bacillus thuringiensis isolates closely related to Bacillus anthracis.</title>
        <authorList>
            <person name="Han C.S."/>
            <person name="Xie G."/>
            <person name="Challacombe J.F."/>
            <person name="Altherr M.R."/>
            <person name="Bhotika S.S."/>
            <person name="Bruce D."/>
            <person name="Campbell C.S."/>
            <person name="Campbell M.L."/>
            <person name="Chen J."/>
            <person name="Chertkov O."/>
            <person name="Cleland C."/>
            <person name="Dimitrijevic M."/>
            <person name="Doggett N.A."/>
            <person name="Fawcett J.J."/>
            <person name="Glavina T."/>
            <person name="Goodwin L.A."/>
            <person name="Hill K.K."/>
            <person name="Hitchcock P."/>
            <person name="Jackson P.J."/>
            <person name="Keim P."/>
            <person name="Kewalramani A.R."/>
            <person name="Longmire J."/>
            <person name="Lucas S."/>
            <person name="Malfatti S."/>
            <person name="McMurry K."/>
            <person name="Meincke L.J."/>
            <person name="Misra M."/>
            <person name="Moseman B.L."/>
            <person name="Mundt M."/>
            <person name="Munk A.C."/>
            <person name="Okinaka R.T."/>
            <person name="Parson-Quintana B."/>
            <person name="Reilly L.P."/>
            <person name="Richardson P."/>
            <person name="Robinson D.L."/>
            <person name="Rubin E."/>
            <person name="Saunders E."/>
            <person name="Tapia R."/>
            <person name="Tesmer J.G."/>
            <person name="Thayer N."/>
            <person name="Thompson L.S."/>
            <person name="Tice H."/>
            <person name="Ticknor L.O."/>
            <person name="Wills P.L."/>
            <person name="Brettin T.S."/>
            <person name="Gilna P."/>
        </authorList>
    </citation>
    <scope>NUCLEOTIDE SEQUENCE [LARGE SCALE GENOMIC DNA]</scope>
    <source>
        <strain>97-27</strain>
    </source>
</reference>
<sequence>MFRIGQGFDVHEFAEGRPLIIGGITIPHEKGLIGHSDADVLLHTIADACLGAIAAGDIGKHFPDTDPAFKDADSAVLLQKVWEFVREQGYELGNLDCTIIAQKPKMAPHIESMRKRISELLETSIDNINVKATTTEKLGFTGREEGIASQAVVLLQKK</sequence>
<feature type="chain" id="PRO_0000189439" description="2-C-methyl-D-erythritol 2,4-cyclodiphosphate synthase">
    <location>
        <begin position="1"/>
        <end position="158"/>
    </location>
</feature>
<feature type="binding site" evidence="1">
    <location>
        <begin position="9"/>
        <end position="11"/>
    </location>
    <ligand>
        <name>4-CDP-2-C-methyl-D-erythritol 2-phosphate</name>
        <dbReference type="ChEBI" id="CHEBI:57919"/>
    </ligand>
</feature>
<feature type="binding site" evidence="1">
    <location>
        <position position="9"/>
    </location>
    <ligand>
        <name>a divalent metal cation</name>
        <dbReference type="ChEBI" id="CHEBI:60240"/>
    </ligand>
</feature>
<feature type="binding site" evidence="1">
    <location>
        <position position="11"/>
    </location>
    <ligand>
        <name>a divalent metal cation</name>
        <dbReference type="ChEBI" id="CHEBI:60240"/>
    </ligand>
</feature>
<feature type="binding site" evidence="1">
    <location>
        <begin position="35"/>
        <end position="36"/>
    </location>
    <ligand>
        <name>4-CDP-2-C-methyl-D-erythritol 2-phosphate</name>
        <dbReference type="ChEBI" id="CHEBI:57919"/>
    </ligand>
</feature>
<feature type="binding site" evidence="1">
    <location>
        <position position="43"/>
    </location>
    <ligand>
        <name>a divalent metal cation</name>
        <dbReference type="ChEBI" id="CHEBI:60240"/>
    </ligand>
</feature>
<feature type="binding site" evidence="1">
    <location>
        <begin position="57"/>
        <end position="59"/>
    </location>
    <ligand>
        <name>4-CDP-2-C-methyl-D-erythritol 2-phosphate</name>
        <dbReference type="ChEBI" id="CHEBI:57919"/>
    </ligand>
</feature>
<feature type="binding site" evidence="1">
    <location>
        <begin position="62"/>
        <end position="66"/>
    </location>
    <ligand>
        <name>4-CDP-2-C-methyl-D-erythritol 2-phosphate</name>
        <dbReference type="ChEBI" id="CHEBI:57919"/>
    </ligand>
</feature>
<feature type="binding site" evidence="1">
    <location>
        <begin position="101"/>
        <end position="107"/>
    </location>
    <ligand>
        <name>4-CDP-2-C-methyl-D-erythritol 2-phosphate</name>
        <dbReference type="ChEBI" id="CHEBI:57919"/>
    </ligand>
</feature>
<feature type="binding site" evidence="1">
    <location>
        <begin position="133"/>
        <end position="136"/>
    </location>
    <ligand>
        <name>4-CDP-2-C-methyl-D-erythritol 2-phosphate</name>
        <dbReference type="ChEBI" id="CHEBI:57919"/>
    </ligand>
</feature>
<feature type="binding site" evidence="1">
    <location>
        <position position="140"/>
    </location>
    <ligand>
        <name>4-CDP-2-C-methyl-D-erythritol 2-phosphate</name>
        <dbReference type="ChEBI" id="CHEBI:57919"/>
    </ligand>
</feature>
<feature type="binding site" evidence="1">
    <location>
        <position position="143"/>
    </location>
    <ligand>
        <name>4-CDP-2-C-methyl-D-erythritol 2-phosphate</name>
        <dbReference type="ChEBI" id="CHEBI:57919"/>
    </ligand>
</feature>
<feature type="site" description="Transition state stabilizer" evidence="1">
    <location>
        <position position="35"/>
    </location>
</feature>
<feature type="site" description="Transition state stabilizer" evidence="1">
    <location>
        <position position="134"/>
    </location>
</feature>
<accession>Q6HPT1</accession>
<proteinExistence type="inferred from homology"/>
<name>ISPF_BACHK</name>
<evidence type="ECO:0000255" key="1">
    <source>
        <dbReference type="HAMAP-Rule" id="MF_00107"/>
    </source>
</evidence>